<comment type="function">
    <text>One of at least two accessory proteins for anaerobic nitric oxide (NO) reductase. Reduces the rubredoxin moiety of NO reductase.</text>
</comment>
<comment type="catalytic activity">
    <reaction>
        <text>2 reduced [nitric oxide reductase rubredoxin domain] + NAD(+) + H(+) = 2 oxidized [nitric oxide reductase rubredoxin domain] + NADH</text>
        <dbReference type="Rhea" id="RHEA:42960"/>
        <dbReference type="Rhea" id="RHEA-COMP:10304"/>
        <dbReference type="Rhea" id="RHEA-COMP:10305"/>
        <dbReference type="ChEBI" id="CHEBI:15378"/>
        <dbReference type="ChEBI" id="CHEBI:29033"/>
        <dbReference type="ChEBI" id="CHEBI:29034"/>
        <dbReference type="ChEBI" id="CHEBI:57540"/>
        <dbReference type="ChEBI" id="CHEBI:57945"/>
    </reaction>
</comment>
<comment type="cofactor">
    <cofactor evidence="1">
        <name>FAD</name>
        <dbReference type="ChEBI" id="CHEBI:57692"/>
    </cofactor>
</comment>
<comment type="pathway">
    <text>Nitrogen metabolism; nitric oxide reduction.</text>
</comment>
<comment type="subcellular location">
    <subcellularLocation>
        <location>Cytoplasm</location>
    </subcellularLocation>
</comment>
<comment type="induction">
    <text>Submicromolar concentrations of NO induce anaerobic expression. Repressed by oxygen in the presence of NO.</text>
</comment>
<comment type="similarity">
    <text evidence="1">Belongs to the FAD-dependent oxidoreductase family.</text>
</comment>
<proteinExistence type="evidence at protein level"/>
<gene>
    <name type="primary">norW</name>
    <name type="synonym">flrR</name>
    <name type="synonym">ygbD</name>
    <name type="ordered locus">b2711</name>
    <name type="ordered locus">JW2681</name>
</gene>
<keyword id="KW-0963">Cytoplasm</keyword>
<keyword id="KW-0903">Direct protein sequencing</keyword>
<keyword id="KW-0274">FAD</keyword>
<keyword id="KW-0285">Flavoprotein</keyword>
<keyword id="KW-0520">NAD</keyword>
<keyword id="KW-0560">Oxidoreductase</keyword>
<keyword id="KW-1185">Reference proteome</keyword>
<feature type="chain" id="PRO_0000167662" description="Nitric oxide reductase FlRd-NAD(+) reductase">
    <location>
        <begin position="1"/>
        <end position="377"/>
    </location>
</feature>
<feature type="sequence conflict" description="In Ref. 1 and 4." evidence="1" ref="1 4">
    <original>S</original>
    <variation>N</variation>
    <location>
        <position position="264"/>
    </location>
</feature>
<protein>
    <recommendedName>
        <fullName>Nitric oxide reductase FlRd-NAD(+) reductase</fullName>
        <ecNumber>1.18.1.-</ecNumber>
    </recommendedName>
    <alternativeName>
        <fullName>Flavorubredoxin reductase</fullName>
        <shortName>FlRd-reductase</shortName>
        <shortName>FlavoRb reductase</shortName>
    </alternativeName>
</protein>
<name>NORW_ECOLI</name>
<organism>
    <name type="scientific">Escherichia coli (strain K12)</name>
    <dbReference type="NCBI Taxonomy" id="83333"/>
    <lineage>
        <taxon>Bacteria</taxon>
        <taxon>Pseudomonadati</taxon>
        <taxon>Pseudomonadota</taxon>
        <taxon>Gammaproteobacteria</taxon>
        <taxon>Enterobacterales</taxon>
        <taxon>Enterobacteriaceae</taxon>
        <taxon>Escherichia</taxon>
    </lineage>
</organism>
<sequence length="377" mass="41404">MSNGIVIIGSGFAARQLVKNIRKQDATIPLTLIAADSMDEYNKPDLSHVISQGQRADDLTRQTAGEFAEQFNLHLFPQTWVTDIDAEARVVKSQNNQWQYDKLVLATGASAFVPPVPGRELMLTLNSQQEYRACETQLRDARRVLIVGGGLIGSELAMDFCRAGKAVTLIDNAASILASLMPPEVSSRLQHRLTEMGVHLLLKSQLQGLEKTDSGIQATLDRQRNIEVDAVIAATGLRPETALARRAGLTINRGVCVDSYLQTSNTDIYALGDCAEINGQVLPFLQPIQLSAMVLAKNLLGNNTPLKLPAMLVKIKTPELPLHLAGETQRQDLRWQINTERQGMVARGVDDADQLRAFVVSEDRMKEAFGLLKTLPM</sequence>
<accession>P37596</accession>
<accession>Q2MAB8</accession>
<evidence type="ECO:0000305" key="1"/>
<dbReference type="EC" id="1.18.1.-"/>
<dbReference type="EMBL" id="D28595">
    <property type="protein sequence ID" value="BAA05934.1"/>
    <property type="molecule type" value="Genomic_DNA"/>
</dbReference>
<dbReference type="EMBL" id="U29579">
    <property type="protein sequence ID" value="AAA69221.1"/>
    <property type="molecule type" value="Genomic_DNA"/>
</dbReference>
<dbReference type="EMBL" id="U00096">
    <property type="protein sequence ID" value="AAC75753.1"/>
    <property type="molecule type" value="Genomic_DNA"/>
</dbReference>
<dbReference type="EMBL" id="AP009048">
    <property type="protein sequence ID" value="BAE76788.1"/>
    <property type="molecule type" value="Genomic_DNA"/>
</dbReference>
<dbReference type="EMBL" id="D14422">
    <property type="status" value="NOT_ANNOTATED_CDS"/>
    <property type="molecule type" value="Genomic_DNA"/>
</dbReference>
<dbReference type="PIR" id="C65051">
    <property type="entry name" value="C65051"/>
</dbReference>
<dbReference type="RefSeq" id="NP_417191.1">
    <property type="nucleotide sequence ID" value="NC_000913.3"/>
</dbReference>
<dbReference type="RefSeq" id="WP_000064752.1">
    <property type="nucleotide sequence ID" value="NZ_STEB01000027.1"/>
</dbReference>
<dbReference type="SMR" id="P37596"/>
<dbReference type="BioGRID" id="4259424">
    <property type="interactions" value="14"/>
</dbReference>
<dbReference type="FunCoup" id="P37596">
    <property type="interactions" value="220"/>
</dbReference>
<dbReference type="STRING" id="511145.b2711"/>
<dbReference type="PaxDb" id="511145-b2711"/>
<dbReference type="EnsemblBacteria" id="AAC75753">
    <property type="protein sequence ID" value="AAC75753"/>
    <property type="gene ID" value="b2711"/>
</dbReference>
<dbReference type="GeneID" id="947088"/>
<dbReference type="KEGG" id="ecj:JW2681"/>
<dbReference type="KEGG" id="eco:b2711"/>
<dbReference type="KEGG" id="ecoc:C3026_14920"/>
<dbReference type="PATRIC" id="fig|1411691.4.peg.4031"/>
<dbReference type="EchoBASE" id="EB2344"/>
<dbReference type="eggNOG" id="COG0446">
    <property type="taxonomic scope" value="Bacteria"/>
</dbReference>
<dbReference type="HOGENOM" id="CLU_003291_4_4_6"/>
<dbReference type="InParanoid" id="P37596"/>
<dbReference type="OMA" id="IHHFWTF"/>
<dbReference type="OrthoDB" id="9808980at2"/>
<dbReference type="PhylomeDB" id="P37596"/>
<dbReference type="BioCyc" id="EcoCyc:EG12450-MONOMER"/>
<dbReference type="BioCyc" id="MetaCyc:EG12450-MONOMER"/>
<dbReference type="UniPathway" id="UPA00638"/>
<dbReference type="PHI-base" id="PHI:10669"/>
<dbReference type="PRO" id="PR:P37596"/>
<dbReference type="Proteomes" id="UP000000625">
    <property type="component" value="Chromosome"/>
</dbReference>
<dbReference type="GO" id="GO:0005737">
    <property type="term" value="C:cytoplasm"/>
    <property type="evidence" value="ECO:0007669"/>
    <property type="project" value="UniProtKB-SubCell"/>
</dbReference>
<dbReference type="GO" id="GO:0050660">
    <property type="term" value="F:flavin adenine dinucleotide binding"/>
    <property type="evidence" value="ECO:0000314"/>
    <property type="project" value="EcoCyc"/>
</dbReference>
<dbReference type="GO" id="GO:0016731">
    <property type="term" value="F:oxidoreductase activity, acting on iron-sulfur proteins as donors, NAD or NADP as acceptor"/>
    <property type="evidence" value="ECO:0000314"/>
    <property type="project" value="EcoCyc"/>
</dbReference>
<dbReference type="GO" id="GO:0015044">
    <property type="term" value="F:rubredoxin-NAD+ reductase activity"/>
    <property type="evidence" value="ECO:0000314"/>
    <property type="project" value="EcoCyc"/>
</dbReference>
<dbReference type="GO" id="GO:0071732">
    <property type="term" value="P:cellular response to nitric oxide"/>
    <property type="evidence" value="ECO:0000270"/>
    <property type="project" value="EcoCyc"/>
</dbReference>
<dbReference type="GO" id="GO:0046210">
    <property type="term" value="P:nitric oxide catabolic process"/>
    <property type="evidence" value="ECO:0000315"/>
    <property type="project" value="EcoCyc"/>
</dbReference>
<dbReference type="FunFam" id="3.30.390.120:FF:000001">
    <property type="entry name" value="Nitric oxide reductase FlRd-NAD(+) reductase"/>
    <property type="match status" value="1"/>
</dbReference>
<dbReference type="FunFam" id="3.50.50.60:FF:000075">
    <property type="entry name" value="Nitric oxide reductase FlRd-NAD(+) reductase"/>
    <property type="match status" value="1"/>
</dbReference>
<dbReference type="Gene3D" id="3.30.390.120">
    <property type="match status" value="1"/>
</dbReference>
<dbReference type="Gene3D" id="3.50.50.60">
    <property type="entry name" value="FAD/NAD(P)-binding domain"/>
    <property type="match status" value="2"/>
</dbReference>
<dbReference type="HAMAP" id="MF_01313">
    <property type="entry name" value="NorW"/>
    <property type="match status" value="1"/>
</dbReference>
<dbReference type="InterPro" id="IPR050260">
    <property type="entry name" value="FAD-bd_OxRdtase"/>
</dbReference>
<dbReference type="InterPro" id="IPR036188">
    <property type="entry name" value="FAD/NAD-bd_sf"/>
</dbReference>
<dbReference type="InterPro" id="IPR023753">
    <property type="entry name" value="FAD/NAD-binding_dom"/>
</dbReference>
<dbReference type="InterPro" id="IPR023961">
    <property type="entry name" value="NO_rdtase_NorW"/>
</dbReference>
<dbReference type="InterPro" id="IPR041364">
    <property type="entry name" value="Rbx-bd"/>
</dbReference>
<dbReference type="NCBIfam" id="NF003437">
    <property type="entry name" value="PRK04965.1"/>
    <property type="match status" value="1"/>
</dbReference>
<dbReference type="PANTHER" id="PTHR43429:SF3">
    <property type="entry name" value="NITRITE REDUCTASE [NAD(P)H]"/>
    <property type="match status" value="1"/>
</dbReference>
<dbReference type="PANTHER" id="PTHR43429">
    <property type="entry name" value="PYRIDINE NUCLEOTIDE-DISULFIDE OXIDOREDUCTASE DOMAIN-CONTAINING"/>
    <property type="match status" value="1"/>
</dbReference>
<dbReference type="Pfam" id="PF07992">
    <property type="entry name" value="Pyr_redox_2"/>
    <property type="match status" value="1"/>
</dbReference>
<dbReference type="Pfam" id="PF18113">
    <property type="entry name" value="Rbx_binding"/>
    <property type="match status" value="1"/>
</dbReference>
<dbReference type="PRINTS" id="PR00368">
    <property type="entry name" value="FADPNR"/>
</dbReference>
<dbReference type="PRINTS" id="PR00411">
    <property type="entry name" value="PNDRDTASEI"/>
</dbReference>
<dbReference type="SUPFAM" id="SSF51905">
    <property type="entry name" value="FAD/NAD(P)-binding domain"/>
    <property type="match status" value="1"/>
</dbReference>
<reference key="1">
    <citation type="submission" date="1994-02" db="EMBL/GenBank/DDBJ databases">
        <title>Sequencing and characterization of the downstream region of hydA in Escherichia coli.</title>
        <authorList>
            <person name="Yano K."/>
            <person name="Ikebukuro K."/>
            <person name="Takada Y."/>
            <person name="Tomiyama M."/>
            <person name="Karube I."/>
        </authorList>
    </citation>
    <scope>NUCLEOTIDE SEQUENCE [GENOMIC DNA]</scope>
    <source>
        <strain>K12</strain>
    </source>
</reference>
<reference key="2">
    <citation type="journal article" date="1997" name="Science">
        <title>The complete genome sequence of Escherichia coli K-12.</title>
        <authorList>
            <person name="Blattner F.R."/>
            <person name="Plunkett G. III"/>
            <person name="Bloch C.A."/>
            <person name="Perna N.T."/>
            <person name="Burland V."/>
            <person name="Riley M."/>
            <person name="Collado-Vides J."/>
            <person name="Glasner J.D."/>
            <person name="Rode C.K."/>
            <person name="Mayhew G.F."/>
            <person name="Gregor J."/>
            <person name="Davis N.W."/>
            <person name="Kirkpatrick H.A."/>
            <person name="Goeden M.A."/>
            <person name="Rose D.J."/>
            <person name="Mau B."/>
            <person name="Shao Y."/>
        </authorList>
    </citation>
    <scope>NUCLEOTIDE SEQUENCE [LARGE SCALE GENOMIC DNA]</scope>
    <source>
        <strain>K12 / MG1655 / ATCC 47076</strain>
    </source>
</reference>
<reference key="3">
    <citation type="journal article" date="2006" name="Mol. Syst. Biol.">
        <title>Highly accurate genome sequences of Escherichia coli K-12 strains MG1655 and W3110.</title>
        <authorList>
            <person name="Hayashi K."/>
            <person name="Morooka N."/>
            <person name="Yamamoto Y."/>
            <person name="Fujita K."/>
            <person name="Isono K."/>
            <person name="Choi S."/>
            <person name="Ohtsubo E."/>
            <person name="Baba T."/>
            <person name="Wanner B.L."/>
            <person name="Mori H."/>
            <person name="Horiuchi T."/>
        </authorList>
    </citation>
    <scope>NUCLEOTIDE SEQUENCE [LARGE SCALE GENOMIC DNA]</scope>
    <source>
        <strain>K12 / W3110 / ATCC 27325 / DSM 5911</strain>
    </source>
</reference>
<reference key="4">
    <citation type="submission" date="1993-02" db="EMBL/GenBank/DDBJ databases">
        <authorList>
            <person name="Ikebukuro K."/>
            <person name="Nishio M."/>
            <person name="Yano K."/>
            <person name="Tomiyama M."/>
            <person name="Tamiya E."/>
            <person name="Karube I."/>
        </authorList>
    </citation>
    <scope>NUCLEOTIDE SEQUENCE [GENOMIC DNA] OF 143-377</scope>
    <source>
        <strain>K12</strain>
    </source>
</reference>
<reference key="5">
    <citation type="journal article" date="1994" name="Nucleic Acids Res.">
        <title>Intrinsic and extrinsic approaches for detecting genes in a bacterial genome.</title>
        <authorList>
            <person name="Borodovsky M."/>
            <person name="Rudd K.E."/>
            <person name="Koonin E.V."/>
        </authorList>
    </citation>
    <scope>IDENTIFICATION</scope>
</reference>
<reference key="6">
    <citation type="journal article" date="2000" name="Biochemistry">
        <title>Spectroscopic studies and characterization of a novel electron-transfer chain from Escherichia coli involving a flavorubredoxin and its flavoprotein reductase partner.</title>
        <authorList>
            <person name="Gomes C.M."/>
            <person name="Vicente J.B."/>
            <person name="Wasserfallen A."/>
            <person name="Teixeira M."/>
        </authorList>
    </citation>
    <scope>PROTEIN SEQUENCE OF N-TERMINUS</scope>
    <scope>CHARACTERIZATION</scope>
</reference>
<reference key="7">
    <citation type="journal article" date="2002" name="J. Biol. Chem.">
        <title>Flavorubredoxin, an inducible catalyst for nitric oxide reduction and detoxification in Escherichia coli.</title>
        <authorList>
            <person name="Gardner A.M."/>
            <person name="Helmick R.A."/>
            <person name="Gardner P.R."/>
        </authorList>
    </citation>
    <scope>IDENTIFICATION OF FUNCTION</scope>
    <source>
        <strain>K12 / AB1157</strain>
    </source>
</reference>
<reference key="8">
    <citation type="journal article" date="2002" name="J. Biol. Chem.">
        <title>A novel type of nitric-oxide reductase. Escherichia coli flavorubredoxin.</title>
        <authorList>
            <person name="Gomes C.M."/>
            <person name="Giuffre A."/>
            <person name="Forte E."/>
            <person name="Vicente J.B."/>
            <person name="Saraiva L.M."/>
            <person name="Brunori M."/>
            <person name="Teixeira M."/>
        </authorList>
    </citation>
    <scope>IDENTIFICATION OF FUNCTION</scope>
</reference>
<reference key="9">
    <citation type="journal article" date="2003" name="J. Biol. Chem.">
        <title>Regulation of the nitric oxide reduction operon (norRVW) in Escherichia coli: role of NorR and sigma 54 in the nitric oxide stress response.</title>
        <authorList>
            <person name="Gardner A.M."/>
            <person name="Gessner C.R."/>
            <person name="Gardner P.R."/>
        </authorList>
    </citation>
    <scope>REGULATION OF EXPRESSION; ANAEROBIC AND NO INDUCED EXPRESSION</scope>
    <scope>REQUIREMENT FOR SIGMA 54</scope>
    <source>
        <strain>K12 / AB1157</strain>
    </source>
</reference>